<reference key="1">
    <citation type="journal article" date="2000" name="J. Infect. Dis.">
        <title>Nucleotide sequences that distinguish Oka vaccine from parental Oka and other varicella-zoster virus isolates.</title>
        <authorList>
            <person name="Argaw T."/>
            <person name="Cohen J.I."/>
            <person name="Klutch M."/>
            <person name="Lekstrom K."/>
            <person name="Yoshikawa T."/>
            <person name="Asano Y."/>
            <person name="Krause P.R."/>
        </authorList>
    </citation>
    <scope>NUCLEOTIDE SEQUENCE [GENOMIC DNA]</scope>
    <source>
        <strain>V-Oka(Biken)</strain>
    </source>
</reference>
<reference key="2">
    <citation type="journal article" date="2001" name="Virology">
        <title>Identification and mapping of single nucleotide polymorphisms in the varicella-zoster virus genome.</title>
        <authorList>
            <person name="Faga B."/>
            <person name="Maury W."/>
            <person name="Bruckner D.A."/>
            <person name="Grose C."/>
        </authorList>
    </citation>
    <scope>NUCLEOTIDE SEQUENCE [GENOMIC DNA]</scope>
    <source>
        <strain>Oka varicella vaccine Biken (V-Oka-Biken)</strain>
    </source>
</reference>
<reference key="3">
    <citation type="journal article" date="2002" name="J. Virol.">
        <title>Comparison of the complete DNA sequences of the Oka varicella vaccine and its parental virus.</title>
        <authorList>
            <person name="Gomi Y."/>
            <person name="Sunamachi H."/>
            <person name="Mori Y."/>
            <person name="Nagaike K."/>
            <person name="Takahashi M."/>
            <person name="Yamanishi K."/>
        </authorList>
    </citation>
    <scope>NUCLEOTIDE SEQUENCE [LARGE SCALE GENOMIC DNA]</scope>
    <source>
        <strain>Isolate Human/Japan/P-Oka/1970</strain>
        <strain>Oka varicella vaccine Biken (V-Oka-Biken)</strain>
    </source>
</reference>
<reference key="4">
    <citation type="journal article" date="2008" name="J. Virol.">
        <title>Complete DNA sequences of two oka strain varicella-zoster virus genomes.</title>
        <authorList>
            <person name="Tillieux S.L."/>
            <person name="Halsey W.S."/>
            <person name="Thomas E.S."/>
            <person name="Voycik J.J."/>
            <person name="Sathe G.M."/>
            <person name="Vassilev V."/>
        </authorList>
    </citation>
    <scope>NUCLEOTIDE SEQUENCE [LARGE SCALE GENOMIC DNA]</scope>
    <source>
        <strain>Oka varicella vaccine VarilRix (V-Oka-GSK)</strain>
        <strain>Oka varicella vaccine Varivax (V-Oka-Merck)</strain>
    </source>
</reference>
<reference key="5">
    <citation type="journal article" date="2002" name="J. Virol.">
        <title>Phosphorylation by the varicella-zoster virus ORF47 protein serine kinase determines whether endocytosed viral gE traffics to the trans-Golgi network or recycles to the cell membrane.</title>
        <authorList>
            <person name="Kenyon T.K."/>
            <person name="Cohen J.I."/>
            <person name="Grose C."/>
        </authorList>
    </citation>
    <scope>SUBCELLULAR LOCATION</scope>
    <scope>PHOSPHORYLATION AT SER-593; SER-595; THR-596 AND THR-598</scope>
    <scope>MUTAGENESIS OF 593-SER--THR-598</scope>
    <source>
        <strain>R-Oka</strain>
    </source>
</reference>
<reference key="6">
    <citation type="journal article" date="2006" name="Cell">
        <title>Insulin degrading enzyme is a cellular receptor mediating varicella-zoster virus infection and cell-to-cell spread.</title>
        <authorList>
            <person name="Li Q."/>
            <person name="Ali M.A."/>
            <person name="Cohen J.I."/>
        </authorList>
    </citation>
    <scope>INTERACTION WITH HUMAN IDE RECEPTOR</scope>
    <source>
        <strain>R-Oka</strain>
    </source>
</reference>
<reference key="7">
    <citation type="journal article" date="2008" name="J. Virol.">
        <title>Functions of the ORF9-to-ORF12 gene cluster in varicella-zoster virus replication and in the pathogenesis of skin infection.</title>
        <authorList>
            <person name="Che X."/>
            <person name="Reichelt M."/>
            <person name="Sommer M.H."/>
            <person name="Rajamani J."/>
            <person name="Zerboni L."/>
            <person name="Arvin A.M."/>
        </authorList>
    </citation>
    <scope>INTERACTION WITH VP22</scope>
    <source>
        <strain>Isolate Human/Japan/P-Oka/1970</strain>
    </source>
</reference>
<reference key="8">
    <citation type="journal article" date="2009" name="J. Virol.">
        <title>Deletion of the first cysteine-rich region of the varicella-zoster virus glycoprotein E ectodomain abolishes the gE and gI interaction and differentially affects cell-cell spread and viral entry.</title>
        <authorList>
            <person name="Berarducci B."/>
            <person name="Rajamani J."/>
            <person name="Reichelt M."/>
            <person name="Sommer M.H."/>
            <person name="Zerboni L."/>
            <person name="Arvin A.M."/>
        </authorList>
    </citation>
    <scope>INTERACTION WITH HUMAN IDE RECEPTOR AND GLYCOPROTEIN I</scope>
    <source>
        <strain>Isolate Human/Japan/P-Oka/1970</strain>
    </source>
</reference>
<protein>
    <recommendedName>
        <fullName>Envelope glycoprotein E</fullName>
        <shortName>gE</shortName>
    </recommendedName>
</protein>
<sequence length="623" mass="69968">MGTVNKPVVGVLMGFGIITGTLRITNPVRASVLRYDDFHIDEDKLDTNSVYEPYYHSDHAESSWVNRGESSRKAYDHNSPYIWPRNDYDGFLENAHEHHGVYNQGRGIDSGERLMQPTQMSAQEDLGDDTGIHVIPTLNGDDRHKIVNVDQRQYGDVFKGDLNPKPQGQRLIEVSVEENHPFTLRAPIQRIYGVRYTETWSFLPSLTCTGDAAPAIQHICLKHTTCFQDVVVDVDCAENTKEDQLAEISYRFQGKKEADQPWIVVNTSTLFDELELDPPEIEPGVLKVLRTEKQYLGVYIWNMRGSDGTSTYATFLVTWKGDEKTRNPTPAVTPQPRGAEFHMWNYHSHVFSVGDTFSLAMHLQYKIHEAPFDLLLEWLYVPIDPTCQPMRLYSTCLYHPNAPQCLSHMNSGCTFTSPHLAQRVASTVYQNCEHADNYTAYCLGISHMEPSFGLILHDGGTTLKFVDTPESLSGLYVFVVYFNGHVEAVAYTVVSTVDHFVNAIEERGFPPTAGQPPATTKPKEITPVNPGTSPLLRYAAWTGGLAAVVLLCLVIFLICTAKRMRVKAYRVDKSPYNQSMYYAGLPVDDFEDSESTDTEEEFGNAIGGSHGGSSYTVYIDKTR</sequence>
<name>GE_VZVO</name>
<keyword id="KW-1015">Disulfide bond</keyword>
<keyword id="KW-0325">Glycoprotein</keyword>
<keyword id="KW-1031">Host cell junction</keyword>
<keyword id="KW-1032">Host cell membrane</keyword>
<keyword id="KW-1039">Host endosome</keyword>
<keyword id="KW-1040">Host Golgi apparatus</keyword>
<keyword id="KW-1043">Host membrane</keyword>
<keyword id="KW-0945">Host-virus interaction</keyword>
<keyword id="KW-0472">Membrane</keyword>
<keyword id="KW-0597">Phosphoprotein</keyword>
<keyword id="KW-0732">Signal</keyword>
<keyword id="KW-0765">Sulfation</keyword>
<keyword id="KW-0812">Transmembrane</keyword>
<keyword id="KW-1133">Transmembrane helix</keyword>
<keyword id="KW-1161">Viral attachment to host cell</keyword>
<keyword id="KW-1234">Viral attachment to host entry receptor</keyword>
<keyword id="KW-0261">Viral envelope protein</keyword>
<keyword id="KW-0899">Viral immunoevasion</keyword>
<keyword id="KW-0946">Virion</keyword>
<keyword id="KW-1160">Virus entry into host cell</keyword>
<organismHost>
    <name type="scientific">Homo sapiens</name>
    <name type="common">Human</name>
    <dbReference type="NCBI Taxonomy" id="9606"/>
</organismHost>
<dbReference type="EMBL" id="AF206304">
    <property type="protein sequence ID" value="AAF61669.1"/>
    <property type="molecule type" value="Genomic_DNA"/>
</dbReference>
<dbReference type="EMBL" id="AH010548">
    <property type="protein sequence ID" value="AAK19946.1"/>
    <property type="molecule type" value="Genomic_DNA"/>
</dbReference>
<dbReference type="EMBL" id="AB097932">
    <property type="status" value="NOT_ANNOTATED_CDS"/>
    <property type="molecule type" value="Genomic_DNA"/>
</dbReference>
<dbReference type="EMBL" id="AB097933">
    <property type="status" value="NOT_ANNOTATED_CDS"/>
    <property type="molecule type" value="Genomic_DNA"/>
</dbReference>
<dbReference type="EMBL" id="DQ008354">
    <property type="protein sequence ID" value="AAY57677.1"/>
    <property type="molecule type" value="Genomic_DNA"/>
</dbReference>
<dbReference type="EMBL" id="DQ008355">
    <property type="protein sequence ID" value="AAY57748.1"/>
    <property type="molecule type" value="Genomic_DNA"/>
</dbReference>
<dbReference type="SMR" id="Q9J3M8"/>
<dbReference type="DIP" id="DIP-56349N"/>
<dbReference type="ELM" id="Q9J3M8"/>
<dbReference type="IntAct" id="Q9J3M8">
    <property type="interactions" value="19"/>
</dbReference>
<dbReference type="GlyCosmos" id="Q9J3M8">
    <property type="glycosylation" value="2 sites, No reported glycans"/>
</dbReference>
<dbReference type="Proteomes" id="UP000002603">
    <property type="component" value="Genome"/>
</dbReference>
<dbReference type="Proteomes" id="UP000008504">
    <property type="component" value="Genome"/>
</dbReference>
<dbReference type="Proteomes" id="UP000008505">
    <property type="component" value="Genome"/>
</dbReference>
<dbReference type="Proteomes" id="UP000008506">
    <property type="component" value="Genome"/>
</dbReference>
<dbReference type="GO" id="GO:0044175">
    <property type="term" value="C:host cell endosome membrane"/>
    <property type="evidence" value="ECO:0007669"/>
    <property type="project" value="UniProtKB-SubCell"/>
</dbReference>
<dbReference type="GO" id="GO:0044178">
    <property type="term" value="C:host cell Golgi membrane"/>
    <property type="evidence" value="ECO:0007669"/>
    <property type="project" value="UniProtKB-SubCell"/>
</dbReference>
<dbReference type="GO" id="GO:0044156">
    <property type="term" value="C:host cell junction"/>
    <property type="evidence" value="ECO:0007669"/>
    <property type="project" value="UniProtKB-SubCell"/>
</dbReference>
<dbReference type="GO" id="GO:0016020">
    <property type="term" value="C:membrane"/>
    <property type="evidence" value="ECO:0007669"/>
    <property type="project" value="UniProtKB-KW"/>
</dbReference>
<dbReference type="GO" id="GO:0019031">
    <property type="term" value="C:viral envelope"/>
    <property type="evidence" value="ECO:0007669"/>
    <property type="project" value="UniProtKB-KW"/>
</dbReference>
<dbReference type="GO" id="GO:0055036">
    <property type="term" value="C:virion membrane"/>
    <property type="evidence" value="ECO:0007669"/>
    <property type="project" value="UniProtKB-SubCell"/>
</dbReference>
<dbReference type="GO" id="GO:0019899">
    <property type="term" value="F:enzyme binding"/>
    <property type="evidence" value="ECO:0000353"/>
    <property type="project" value="UniProtKB"/>
</dbReference>
<dbReference type="GO" id="GO:0098670">
    <property type="term" value="P:entry receptor-mediated virion attachment to host cell"/>
    <property type="evidence" value="ECO:0007669"/>
    <property type="project" value="UniProtKB-KW"/>
</dbReference>
<dbReference type="GO" id="GO:0046718">
    <property type="term" value="P:symbiont entry into host cell"/>
    <property type="evidence" value="ECO:0007669"/>
    <property type="project" value="UniProtKB-KW"/>
</dbReference>
<dbReference type="Gene3D" id="2.60.40.10">
    <property type="entry name" value="Immunoglobulins"/>
    <property type="match status" value="1"/>
</dbReference>
<dbReference type="InterPro" id="IPR046463">
    <property type="entry name" value="Herpes_gE_N"/>
</dbReference>
<dbReference type="InterPro" id="IPR003404">
    <property type="entry name" value="Herpes_glycopE_Fc"/>
</dbReference>
<dbReference type="InterPro" id="IPR036179">
    <property type="entry name" value="Ig-like_dom_sf"/>
</dbReference>
<dbReference type="InterPro" id="IPR013783">
    <property type="entry name" value="Ig-like_fold"/>
</dbReference>
<dbReference type="Pfam" id="PF02480">
    <property type="entry name" value="Herpes_gE"/>
    <property type="match status" value="1"/>
</dbReference>
<dbReference type="Pfam" id="PF20418">
    <property type="entry name" value="Herpes_gE_N"/>
    <property type="match status" value="1"/>
</dbReference>
<dbReference type="SUPFAM" id="SSF48726">
    <property type="entry name" value="Immunoglobulin"/>
    <property type="match status" value="1"/>
</dbReference>
<gene>
    <name type="primary">gE</name>
    <name type="ORF">ORF68</name>
</gene>
<proteinExistence type="evidence at protein level"/>
<accession>Q9J3M8</accession>
<evidence type="ECO:0000250" key="1"/>
<evidence type="ECO:0000255" key="2"/>
<evidence type="ECO:0000269" key="3">
    <source>
    </source>
</evidence>
<evidence type="ECO:0000305" key="4"/>
<feature type="signal peptide" evidence="2">
    <location>
        <begin position="1"/>
        <end position="30"/>
    </location>
</feature>
<feature type="chain" id="PRO_0000385499" description="Envelope glycoprotein E">
    <location>
        <begin position="31"/>
        <end position="623"/>
    </location>
</feature>
<feature type="topological domain" description="Virion surface" evidence="2">
    <location>
        <begin position="31"/>
        <end position="538"/>
    </location>
</feature>
<feature type="transmembrane region" description="Helical" evidence="2">
    <location>
        <begin position="539"/>
        <end position="559"/>
    </location>
</feature>
<feature type="topological domain" description="Intravirion" evidence="2">
    <location>
        <begin position="560"/>
        <end position="623"/>
    </location>
</feature>
<feature type="region of interest" description="Interaction with gI">
    <location>
        <begin position="208"/>
        <end position="236"/>
    </location>
</feature>
<feature type="region of interest" description="Fc-binding" evidence="1">
    <location>
        <begin position="352"/>
        <end position="499"/>
    </location>
</feature>
<feature type="region of interest" description="Acidic">
    <location>
        <begin position="588"/>
        <end position="601"/>
    </location>
</feature>
<feature type="short sequence motif" description="Internalization motif" evidence="2">
    <location>
        <begin position="582"/>
        <end position="585"/>
    </location>
</feature>
<feature type="modified residue" description="Sulfotyrosine; by host" evidence="2">
    <location>
        <position position="438"/>
    </location>
</feature>
<feature type="modified residue" description="Sulfotyrosine; by host" evidence="2">
    <location>
        <position position="441"/>
    </location>
</feature>
<feature type="modified residue" description="Phosphoserine" evidence="1">
    <location>
        <position position="593"/>
    </location>
</feature>
<feature type="modified residue" description="Phosphoserine" evidence="1">
    <location>
        <position position="595"/>
    </location>
</feature>
<feature type="modified residue" description="Phosphothreonine" evidence="1">
    <location>
        <position position="596"/>
    </location>
</feature>
<feature type="modified residue" description="Phosphothreonine" evidence="1">
    <location>
        <position position="598"/>
    </location>
</feature>
<feature type="glycosylation site" description="N-linked (GlcNAc...) asparagine; by host" evidence="2">
    <location>
        <position position="266"/>
    </location>
</feature>
<feature type="glycosylation site" description="N-linked (GlcNAc...) asparagine; by host" evidence="2">
    <location>
        <position position="437"/>
    </location>
</feature>
<feature type="disulfide bond" evidence="1">
    <location>
        <begin position="387"/>
        <end position="413"/>
    </location>
</feature>
<feature type="disulfide bond" evidence="1">
    <location>
        <begin position="396"/>
        <end position="405"/>
    </location>
</feature>
<feature type="disulfide bond" evidence="1">
    <location>
        <begin position="432"/>
        <end position="442"/>
    </location>
</feature>
<feature type="mutagenesis site" description="Complete loss of phosphorylation by ORF47 kinase." evidence="3">
    <original>SESTDT</original>
    <variation>AESADA</variation>
    <location>
        <begin position="593"/>
        <end position="598"/>
    </location>
</feature>
<comment type="function">
    <text>Envelope glycoprotein that binds to the potential host cell entry receptor IDE.</text>
</comment>
<comment type="function">
    <text evidence="1">In epithelial cells, the heterodimer gE/gI is required for the cell-to-cell spread of the virus, by sorting nascent virions to cell junctions. Once the virus reaches the cell junctions, virus particles can spread to adjacent cells extremely rapidly through interactions with cellular receptors that accumulate at these junctions. Implicated in basolateral spread in polarized cells. In neuronal cells, gE/gI is essential for the anterograde spread of the infection throughout the host nervous system. Together with US9, the heterodimer gE/gI is involved in the sorting and transport of viral structural components toward axon tips (By similarity).</text>
</comment>
<comment type="function">
    <text evidence="1">The heterodimer gE/gI serves as a receptor for the Fc part of host IgG. Dissociation of gE/gI from IgG occurs at acidic pH. May thus be involved in anti-VZV antibodies bipolar bridging, followed by intracellular endocytosis and degradation, thereby interfering with host IgG-mediated immune responses (By similarity).</text>
</comment>
<comment type="subunit">
    <text evidence="1">Interacts (via N-terminus) with host receptor IDE (via N-terminus). Interacts with gI; this interaction enhances the Fc receptor function of gE (By similarity). The heterodimer gE/gI interacts with the Fc part of host IgG (By similarity).</text>
</comment>
<comment type="interaction">
    <interactant intactId="EBI-2532305">
        <id>Q9J3M8</id>
    </interactant>
    <interactant intactId="EBI-2533019">
        <id>Q77NN4</id>
        <label>gI</label>
    </interactant>
    <organismsDiffer>false</organismsDiffer>
    <experiments>3</experiments>
</comment>
<comment type="interaction">
    <interactant intactId="EBI-2532305">
        <id>Q9J3M8</id>
    </interactant>
    <interactant intactId="EBI-15607031">
        <id>P14735-1</id>
        <label>IDE</label>
    </interactant>
    <organismsDiffer>true</organismsDiffer>
    <experiments>2</experiments>
</comment>
<comment type="subcellular location">
    <subcellularLocation>
        <location evidence="1">Virion membrane</location>
        <topology evidence="1">Single-pass type I membrane protein</topology>
    </subcellularLocation>
    <subcellularLocation>
        <location evidence="1">Host cell membrane</location>
        <topology evidence="1">Single-pass type I membrane protein</topology>
    </subcellularLocation>
    <subcellularLocation>
        <location evidence="1">Host cell junction</location>
    </subcellularLocation>
    <subcellularLocation>
        <location evidence="1">Host Golgi apparatus membrane</location>
        <topology evidence="1">Single-pass membrane protein</topology>
    </subcellularLocation>
    <subcellularLocation>
        <location evidence="1">Host endosome membrane</location>
        <topology evidence="1">Single-pass membrane protein</topology>
    </subcellularLocation>
    <text evidence="1">During virion morphogenesis, this protein probably accumulates in the endosomes and trans-Golgi where secondary envelopment occurs. It is probably transported to the cell surface from where it is endocytosed and directed to the trans-Golgi network (TGN), maybe through an interaction with PACS-1 sorting protein. The heterodimer gE/gI then redistributes to cell junctions to promote cell-cell spread later in the infection (By similarity).</text>
</comment>
<comment type="PTM">
    <text evidence="4">Phosphorylated on serines within the acidic cluster. Phosphorylation determines whether endocytosed viral gE traffics to the trans-Golgi network or recycles to the cell membrane.</text>
</comment>
<comment type="similarity">
    <text evidence="4">Belongs to the alphaherpesvirinae glycoprotein E family.</text>
</comment>
<organism>
    <name type="scientific">Varicella-zoster virus (strain Oka vaccine)</name>
    <name type="common">HHV-3</name>
    <name type="synonym">Human herpesvirus 3</name>
    <dbReference type="NCBI Taxonomy" id="341980"/>
    <lineage>
        <taxon>Viruses</taxon>
        <taxon>Duplodnaviria</taxon>
        <taxon>Heunggongvirae</taxon>
        <taxon>Peploviricota</taxon>
        <taxon>Herviviricetes</taxon>
        <taxon>Herpesvirales</taxon>
        <taxon>Orthoherpesviridae</taxon>
        <taxon>Alphaherpesvirinae</taxon>
        <taxon>Varicellovirus</taxon>
        <taxon>Varicellovirus humanalpha3</taxon>
        <taxon>Human herpesvirus 3</taxon>
    </lineage>
</organism>